<feature type="chain" id="PRO_1000119812" description="Oxygen-dependent coproporphyrinogen-III oxidase">
    <location>
        <begin position="1"/>
        <end position="302"/>
    </location>
</feature>
<feature type="region of interest" description="Important for dimerization" evidence="1">
    <location>
        <begin position="242"/>
        <end position="277"/>
    </location>
</feature>
<feature type="active site" description="Proton donor" evidence="1">
    <location>
        <position position="108"/>
    </location>
</feature>
<feature type="binding site" evidence="1">
    <location>
        <position position="94"/>
    </location>
    <ligand>
        <name>substrate</name>
    </ligand>
</feature>
<feature type="binding site" evidence="1">
    <location>
        <position position="98"/>
    </location>
    <ligand>
        <name>a divalent metal cation</name>
        <dbReference type="ChEBI" id="CHEBI:60240"/>
    </ligand>
</feature>
<feature type="binding site" evidence="1">
    <location>
        <position position="108"/>
    </location>
    <ligand>
        <name>a divalent metal cation</name>
        <dbReference type="ChEBI" id="CHEBI:60240"/>
    </ligand>
</feature>
<feature type="binding site" evidence="1">
    <location>
        <begin position="110"/>
        <end position="112"/>
    </location>
    <ligand>
        <name>substrate</name>
    </ligand>
</feature>
<feature type="binding site" evidence="1">
    <location>
        <position position="147"/>
    </location>
    <ligand>
        <name>a divalent metal cation</name>
        <dbReference type="ChEBI" id="CHEBI:60240"/>
    </ligand>
</feature>
<feature type="binding site" evidence="1">
    <location>
        <position position="177"/>
    </location>
    <ligand>
        <name>a divalent metal cation</name>
        <dbReference type="ChEBI" id="CHEBI:60240"/>
    </ligand>
</feature>
<feature type="binding site" evidence="1">
    <location>
        <begin position="260"/>
        <end position="262"/>
    </location>
    <ligand>
        <name>substrate</name>
    </ligand>
</feature>
<feature type="site" description="Important for dimerization" evidence="1">
    <location>
        <position position="177"/>
    </location>
</feature>
<dbReference type="EC" id="1.3.3.3" evidence="1"/>
<dbReference type="EMBL" id="CP001068">
    <property type="protein sequence ID" value="ACD27524.1"/>
    <property type="molecule type" value="Genomic_DNA"/>
</dbReference>
<dbReference type="SMR" id="B2U8Z4"/>
<dbReference type="STRING" id="402626.Rpic_2390"/>
<dbReference type="KEGG" id="rpi:Rpic_2390"/>
<dbReference type="eggNOG" id="COG0408">
    <property type="taxonomic scope" value="Bacteria"/>
</dbReference>
<dbReference type="HOGENOM" id="CLU_026169_0_1_4"/>
<dbReference type="UniPathway" id="UPA00251">
    <property type="reaction ID" value="UER00322"/>
</dbReference>
<dbReference type="GO" id="GO:0005737">
    <property type="term" value="C:cytoplasm"/>
    <property type="evidence" value="ECO:0007669"/>
    <property type="project" value="UniProtKB-SubCell"/>
</dbReference>
<dbReference type="GO" id="GO:0004109">
    <property type="term" value="F:coproporphyrinogen oxidase activity"/>
    <property type="evidence" value="ECO:0007669"/>
    <property type="project" value="UniProtKB-UniRule"/>
</dbReference>
<dbReference type="GO" id="GO:0046872">
    <property type="term" value="F:metal ion binding"/>
    <property type="evidence" value="ECO:0007669"/>
    <property type="project" value="UniProtKB-KW"/>
</dbReference>
<dbReference type="GO" id="GO:0042803">
    <property type="term" value="F:protein homodimerization activity"/>
    <property type="evidence" value="ECO:0000250"/>
    <property type="project" value="UniProtKB"/>
</dbReference>
<dbReference type="GO" id="GO:0006782">
    <property type="term" value="P:protoporphyrinogen IX biosynthetic process"/>
    <property type="evidence" value="ECO:0007669"/>
    <property type="project" value="UniProtKB-UniRule"/>
</dbReference>
<dbReference type="FunFam" id="3.40.1500.10:FF:000001">
    <property type="entry name" value="Oxygen-dependent coproporphyrinogen-III oxidase"/>
    <property type="match status" value="1"/>
</dbReference>
<dbReference type="Gene3D" id="3.40.1500.10">
    <property type="entry name" value="Coproporphyrinogen III oxidase, aerobic"/>
    <property type="match status" value="1"/>
</dbReference>
<dbReference type="HAMAP" id="MF_00333">
    <property type="entry name" value="Coprogen_oxidas"/>
    <property type="match status" value="1"/>
</dbReference>
<dbReference type="InterPro" id="IPR001260">
    <property type="entry name" value="Coprogen_oxidase_aer"/>
</dbReference>
<dbReference type="InterPro" id="IPR036406">
    <property type="entry name" value="Coprogen_oxidase_aer_sf"/>
</dbReference>
<dbReference type="InterPro" id="IPR018375">
    <property type="entry name" value="Coprogen_oxidase_CS"/>
</dbReference>
<dbReference type="NCBIfam" id="NF003727">
    <property type="entry name" value="PRK05330.1"/>
    <property type="match status" value="1"/>
</dbReference>
<dbReference type="PANTHER" id="PTHR10755">
    <property type="entry name" value="COPROPORPHYRINOGEN III OXIDASE, MITOCHONDRIAL"/>
    <property type="match status" value="1"/>
</dbReference>
<dbReference type="PANTHER" id="PTHR10755:SF0">
    <property type="entry name" value="OXYGEN-DEPENDENT COPROPORPHYRINOGEN-III OXIDASE, MITOCHONDRIAL"/>
    <property type="match status" value="1"/>
</dbReference>
<dbReference type="Pfam" id="PF01218">
    <property type="entry name" value="Coprogen_oxidas"/>
    <property type="match status" value="1"/>
</dbReference>
<dbReference type="PIRSF" id="PIRSF000166">
    <property type="entry name" value="Coproporphyri_ox"/>
    <property type="match status" value="1"/>
</dbReference>
<dbReference type="PRINTS" id="PR00073">
    <property type="entry name" value="COPRGNOXDASE"/>
</dbReference>
<dbReference type="SUPFAM" id="SSF102886">
    <property type="entry name" value="Coproporphyrinogen III oxidase"/>
    <property type="match status" value="1"/>
</dbReference>
<dbReference type="PROSITE" id="PS01021">
    <property type="entry name" value="COPROGEN_OXIDASE"/>
    <property type="match status" value="1"/>
</dbReference>
<proteinExistence type="inferred from homology"/>
<protein>
    <recommendedName>
        <fullName evidence="1">Oxygen-dependent coproporphyrinogen-III oxidase</fullName>
        <shortName evidence="1">CPO</shortName>
        <shortName evidence="1">Coprogen oxidase</shortName>
        <shortName evidence="1">Coproporphyrinogenase</shortName>
        <ecNumber evidence="1">1.3.3.3</ecNumber>
    </recommendedName>
</protein>
<gene>
    <name evidence="1" type="primary">hemF</name>
    <name type="ordered locus">Rpic_2390</name>
</gene>
<sequence length="302" mass="34035">MDTQAVRAYLLDLQDRITTAASALDGGTFVTDAWEKPPTERLRGSGRTRILEGGALLERGGVGFSHVMGDTLPPSATANRPELAGRGFEAMGVSLVFHPRNPYVPTVHMNVRCFVAVRSDAAPVWWFGGGMDLTPYYGFTEDASHFHRTCQGALAPYGDELYPRFKQWCDDYFYLKHRKEARGIGGIFFDDFAELGFERSFEMMRSVGDAFLPAWLPIAEQRHATAYGERERAFQAYRRGRYVEFNLVFDRGTLFGLQSGGRAESILMSMPPVANWRYDWQPEPGSPEAALYTDFLPARDWV</sequence>
<comment type="function">
    <text evidence="1">Involved in the heme biosynthesis. Catalyzes the aerobic oxidative decarboxylation of propionate groups of rings A and B of coproporphyrinogen-III to yield the vinyl groups in protoporphyrinogen-IX.</text>
</comment>
<comment type="catalytic activity">
    <reaction evidence="1">
        <text>coproporphyrinogen III + O2 + 2 H(+) = protoporphyrinogen IX + 2 CO2 + 2 H2O</text>
        <dbReference type="Rhea" id="RHEA:18257"/>
        <dbReference type="ChEBI" id="CHEBI:15377"/>
        <dbReference type="ChEBI" id="CHEBI:15378"/>
        <dbReference type="ChEBI" id="CHEBI:15379"/>
        <dbReference type="ChEBI" id="CHEBI:16526"/>
        <dbReference type="ChEBI" id="CHEBI:57307"/>
        <dbReference type="ChEBI" id="CHEBI:57309"/>
        <dbReference type="EC" id="1.3.3.3"/>
    </reaction>
</comment>
<comment type="cofactor">
    <cofactor evidence="1">
        <name>a divalent metal cation</name>
        <dbReference type="ChEBI" id="CHEBI:60240"/>
    </cofactor>
</comment>
<comment type="pathway">
    <text evidence="1">Porphyrin-containing compound metabolism; protoporphyrin-IX biosynthesis; protoporphyrinogen-IX from coproporphyrinogen-III (O2 route): step 1/1.</text>
</comment>
<comment type="subunit">
    <text evidence="1">Homodimer.</text>
</comment>
<comment type="subcellular location">
    <subcellularLocation>
        <location evidence="1">Cytoplasm</location>
    </subcellularLocation>
</comment>
<comment type="similarity">
    <text evidence="1">Belongs to the aerobic coproporphyrinogen-III oxidase family.</text>
</comment>
<evidence type="ECO:0000255" key="1">
    <source>
        <dbReference type="HAMAP-Rule" id="MF_00333"/>
    </source>
</evidence>
<keyword id="KW-0963">Cytoplasm</keyword>
<keyword id="KW-0350">Heme biosynthesis</keyword>
<keyword id="KW-0479">Metal-binding</keyword>
<keyword id="KW-0560">Oxidoreductase</keyword>
<keyword id="KW-0627">Porphyrin biosynthesis</keyword>
<accession>B2U8Z4</accession>
<name>HEM6_RALPJ</name>
<reference key="1">
    <citation type="submission" date="2008-05" db="EMBL/GenBank/DDBJ databases">
        <title>Complete sequence of chromosome 1 of Ralstonia pickettii 12J.</title>
        <authorList>
            <person name="Lucas S."/>
            <person name="Copeland A."/>
            <person name="Lapidus A."/>
            <person name="Glavina del Rio T."/>
            <person name="Dalin E."/>
            <person name="Tice H."/>
            <person name="Bruce D."/>
            <person name="Goodwin L."/>
            <person name="Pitluck S."/>
            <person name="Meincke L."/>
            <person name="Brettin T."/>
            <person name="Detter J.C."/>
            <person name="Han C."/>
            <person name="Kuske C.R."/>
            <person name="Schmutz J."/>
            <person name="Larimer F."/>
            <person name="Land M."/>
            <person name="Hauser L."/>
            <person name="Kyrpides N."/>
            <person name="Mikhailova N."/>
            <person name="Marsh T."/>
            <person name="Richardson P."/>
        </authorList>
    </citation>
    <scope>NUCLEOTIDE SEQUENCE [LARGE SCALE GENOMIC DNA]</scope>
    <source>
        <strain>12J</strain>
    </source>
</reference>
<organism>
    <name type="scientific">Ralstonia pickettii (strain 12J)</name>
    <dbReference type="NCBI Taxonomy" id="402626"/>
    <lineage>
        <taxon>Bacteria</taxon>
        <taxon>Pseudomonadati</taxon>
        <taxon>Pseudomonadota</taxon>
        <taxon>Betaproteobacteria</taxon>
        <taxon>Burkholderiales</taxon>
        <taxon>Burkholderiaceae</taxon>
        <taxon>Ralstonia</taxon>
    </lineage>
</organism>